<accession>P83624</accession>
<comment type="function">
    <text>Involved in oxygen transport from gills to the various peripheral tissues.</text>
</comment>
<comment type="subunit">
    <text evidence="3">Hb1 is a heterotetramer of two alpha chains and two beta-1 chains.</text>
</comment>
<comment type="tissue specificity">
    <text evidence="4">Red blood cells.</text>
</comment>
<comment type="similarity">
    <text evidence="2">Belongs to the globin family.</text>
</comment>
<name>HBB1_PSEUR</name>
<organism>
    <name type="scientific">Pseudaphritis urvillii</name>
    <name type="common">Congolli</name>
    <name type="synonym">Freshwater flathead</name>
    <dbReference type="NCBI Taxonomy" id="56722"/>
    <lineage>
        <taxon>Eukaryota</taxon>
        <taxon>Metazoa</taxon>
        <taxon>Chordata</taxon>
        <taxon>Craniata</taxon>
        <taxon>Vertebrata</taxon>
        <taxon>Euteleostomi</taxon>
        <taxon>Actinopterygii</taxon>
        <taxon>Neopterygii</taxon>
        <taxon>Teleostei</taxon>
        <taxon>Neoteleostei</taxon>
        <taxon>Acanthomorphata</taxon>
        <taxon>Eupercaria</taxon>
        <taxon>Perciformes</taxon>
        <taxon>Notothenioidei</taxon>
        <taxon>Pseudaphritis</taxon>
    </lineage>
</organism>
<protein>
    <recommendedName>
        <fullName>Hemoglobin subunit beta-1</fullName>
    </recommendedName>
    <alternativeName>
        <fullName>Beta-1-globin</fullName>
    </alternativeName>
    <alternativeName>
        <fullName>Hemoglobin beta-1 chain</fullName>
    </alternativeName>
</protein>
<proteinExistence type="evidence at protein level"/>
<keyword id="KW-0903">Direct protein sequencing</keyword>
<keyword id="KW-0349">Heme</keyword>
<keyword id="KW-0408">Iron</keyword>
<keyword id="KW-0479">Metal-binding</keyword>
<keyword id="KW-0561">Oxygen transport</keyword>
<keyword id="KW-0813">Transport</keyword>
<gene>
    <name type="primary">hbb1</name>
</gene>
<reference evidence="4" key="1">
    <citation type="journal article" date="2004" name="Protein Sci.">
        <title>Structure and function of the Gondwanian hemoglobin of Pseudaphritis urvillii, a primitive notothenioid fish of temperate latitudes.</title>
        <authorList>
            <person name="Verde C."/>
            <person name="Howes B.D."/>
            <person name="De Rosa M.C."/>
            <person name="Raiola L."/>
            <person name="Smulevich G."/>
            <person name="Williams R."/>
            <person name="Giardina B."/>
            <person name="Parisi E."/>
            <person name="Di Prisco G."/>
        </authorList>
    </citation>
    <scope>PROTEIN SEQUENCE</scope>
    <scope>SUBUNIT</scope>
    <source>
        <tissue evidence="3">Erythrocyte</tissue>
    </source>
</reference>
<evidence type="ECO:0000250" key="1">
    <source>
        <dbReference type="UniProtKB" id="P80044"/>
    </source>
</evidence>
<evidence type="ECO:0000255" key="2">
    <source>
        <dbReference type="PROSITE-ProRule" id="PRU00238"/>
    </source>
</evidence>
<evidence type="ECO:0000269" key="3">
    <source>
    </source>
</evidence>
<evidence type="ECO:0000305" key="4"/>
<sequence length="146" mass="16394">VVWTNEERSIISSIFSNLDYDDIGPKALCRCLIVYPWTQRHFTTFGNLYTPEAIMTNSKVAEHGVKVLHGLDRAVKNMDNIKATYYDLSILHSEKLHVDPDNFKLLSDCLTIVVAAKMGSGFTPETQAAFQKFLAVVVSALGKQYH</sequence>
<feature type="chain" id="PRO_0000053079" description="Hemoglobin subunit beta-1">
    <location>
        <begin position="1"/>
        <end position="146"/>
    </location>
</feature>
<feature type="domain" description="Globin" evidence="2">
    <location>
        <begin position="2"/>
        <end position="146"/>
    </location>
</feature>
<feature type="binding site" description="distal binding residue" evidence="1 2">
    <location>
        <position position="63"/>
    </location>
    <ligand>
        <name>heme b</name>
        <dbReference type="ChEBI" id="CHEBI:60344"/>
    </ligand>
    <ligandPart>
        <name>Fe</name>
        <dbReference type="ChEBI" id="CHEBI:18248"/>
    </ligandPart>
</feature>
<feature type="binding site" description="proximal binding residue" evidence="1 2">
    <location>
        <position position="92"/>
    </location>
    <ligand>
        <name>heme b</name>
        <dbReference type="ChEBI" id="CHEBI:60344"/>
    </ligand>
    <ligandPart>
        <name>Fe</name>
        <dbReference type="ChEBI" id="CHEBI:18248"/>
    </ligandPart>
</feature>
<dbReference type="SMR" id="P83624"/>
<dbReference type="GO" id="GO:0072562">
    <property type="term" value="C:blood microparticle"/>
    <property type="evidence" value="ECO:0007669"/>
    <property type="project" value="TreeGrafter"/>
</dbReference>
<dbReference type="GO" id="GO:0031838">
    <property type="term" value="C:haptoglobin-hemoglobin complex"/>
    <property type="evidence" value="ECO:0007669"/>
    <property type="project" value="TreeGrafter"/>
</dbReference>
<dbReference type="GO" id="GO:0005833">
    <property type="term" value="C:hemoglobin complex"/>
    <property type="evidence" value="ECO:0000314"/>
    <property type="project" value="UniProtKB"/>
</dbReference>
<dbReference type="GO" id="GO:0031720">
    <property type="term" value="F:haptoglobin binding"/>
    <property type="evidence" value="ECO:0007669"/>
    <property type="project" value="TreeGrafter"/>
</dbReference>
<dbReference type="GO" id="GO:0020037">
    <property type="term" value="F:heme binding"/>
    <property type="evidence" value="ECO:0007669"/>
    <property type="project" value="InterPro"/>
</dbReference>
<dbReference type="GO" id="GO:0046872">
    <property type="term" value="F:metal ion binding"/>
    <property type="evidence" value="ECO:0007669"/>
    <property type="project" value="UniProtKB-KW"/>
</dbReference>
<dbReference type="GO" id="GO:0043177">
    <property type="term" value="F:organic acid binding"/>
    <property type="evidence" value="ECO:0007669"/>
    <property type="project" value="TreeGrafter"/>
</dbReference>
<dbReference type="GO" id="GO:0019825">
    <property type="term" value="F:oxygen binding"/>
    <property type="evidence" value="ECO:0007669"/>
    <property type="project" value="InterPro"/>
</dbReference>
<dbReference type="GO" id="GO:0005344">
    <property type="term" value="F:oxygen carrier activity"/>
    <property type="evidence" value="ECO:0000314"/>
    <property type="project" value="UniProtKB"/>
</dbReference>
<dbReference type="GO" id="GO:0004601">
    <property type="term" value="F:peroxidase activity"/>
    <property type="evidence" value="ECO:0007669"/>
    <property type="project" value="TreeGrafter"/>
</dbReference>
<dbReference type="GO" id="GO:0042744">
    <property type="term" value="P:hydrogen peroxide catabolic process"/>
    <property type="evidence" value="ECO:0007669"/>
    <property type="project" value="TreeGrafter"/>
</dbReference>
<dbReference type="GO" id="GO:0015671">
    <property type="term" value="P:oxygen transport"/>
    <property type="evidence" value="ECO:0000314"/>
    <property type="project" value="UniProtKB"/>
</dbReference>
<dbReference type="CDD" id="cd08925">
    <property type="entry name" value="Hb-beta-like"/>
    <property type="match status" value="1"/>
</dbReference>
<dbReference type="FunFam" id="1.10.490.10:FF:000001">
    <property type="entry name" value="Hemoglobin subunit beta"/>
    <property type="match status" value="1"/>
</dbReference>
<dbReference type="Gene3D" id="1.10.490.10">
    <property type="entry name" value="Globins"/>
    <property type="match status" value="1"/>
</dbReference>
<dbReference type="InterPro" id="IPR000971">
    <property type="entry name" value="Globin"/>
</dbReference>
<dbReference type="InterPro" id="IPR009050">
    <property type="entry name" value="Globin-like_sf"/>
</dbReference>
<dbReference type="InterPro" id="IPR012292">
    <property type="entry name" value="Globin/Proto"/>
</dbReference>
<dbReference type="InterPro" id="IPR002337">
    <property type="entry name" value="Hemoglobin_b"/>
</dbReference>
<dbReference type="InterPro" id="IPR050056">
    <property type="entry name" value="Hemoglobin_oxygen_transport"/>
</dbReference>
<dbReference type="PANTHER" id="PTHR11442">
    <property type="entry name" value="HEMOGLOBIN FAMILY MEMBER"/>
    <property type="match status" value="1"/>
</dbReference>
<dbReference type="PANTHER" id="PTHR11442:SF7">
    <property type="entry name" value="HEMOGLOBIN SUBUNIT EPSILON"/>
    <property type="match status" value="1"/>
</dbReference>
<dbReference type="Pfam" id="PF00042">
    <property type="entry name" value="Globin"/>
    <property type="match status" value="1"/>
</dbReference>
<dbReference type="PRINTS" id="PR00814">
    <property type="entry name" value="BETAHAEM"/>
</dbReference>
<dbReference type="SUPFAM" id="SSF46458">
    <property type="entry name" value="Globin-like"/>
    <property type="match status" value="1"/>
</dbReference>
<dbReference type="PROSITE" id="PS01033">
    <property type="entry name" value="GLOBIN"/>
    <property type="match status" value="1"/>
</dbReference>